<organism>
    <name type="scientific">Shewanella woodyi (strain ATCC 51908 / MS32)</name>
    <dbReference type="NCBI Taxonomy" id="392500"/>
    <lineage>
        <taxon>Bacteria</taxon>
        <taxon>Pseudomonadati</taxon>
        <taxon>Pseudomonadota</taxon>
        <taxon>Gammaproteobacteria</taxon>
        <taxon>Alteromonadales</taxon>
        <taxon>Shewanellaceae</taxon>
        <taxon>Shewanella</taxon>
    </lineage>
</organism>
<proteinExistence type="inferred from homology"/>
<comment type="function">
    <text evidence="1">Catalyzes the conversion of urocanate to 4-imidazolone-5-propionate.</text>
</comment>
<comment type="catalytic activity">
    <reaction evidence="1">
        <text>4-imidazolone-5-propanoate = trans-urocanate + H2O</text>
        <dbReference type="Rhea" id="RHEA:13101"/>
        <dbReference type="ChEBI" id="CHEBI:15377"/>
        <dbReference type="ChEBI" id="CHEBI:17771"/>
        <dbReference type="ChEBI" id="CHEBI:77893"/>
        <dbReference type="EC" id="4.2.1.49"/>
    </reaction>
</comment>
<comment type="cofactor">
    <cofactor evidence="1">
        <name>NAD(+)</name>
        <dbReference type="ChEBI" id="CHEBI:57540"/>
    </cofactor>
    <text evidence="1">Binds 1 NAD(+) per subunit.</text>
</comment>
<comment type="pathway">
    <text evidence="1">Amino-acid degradation; L-histidine degradation into L-glutamate; N-formimidoyl-L-glutamate from L-histidine: step 2/3.</text>
</comment>
<comment type="subcellular location">
    <subcellularLocation>
        <location evidence="1">Cytoplasm</location>
    </subcellularLocation>
</comment>
<comment type="similarity">
    <text evidence="1">Belongs to the urocanase family.</text>
</comment>
<name>HUTU_SHEWM</name>
<dbReference type="EC" id="4.2.1.49" evidence="1"/>
<dbReference type="EMBL" id="CP000961">
    <property type="protein sequence ID" value="ACA89087.1"/>
    <property type="molecule type" value="Genomic_DNA"/>
</dbReference>
<dbReference type="RefSeq" id="WP_012327404.1">
    <property type="nucleotide sequence ID" value="NC_010506.1"/>
</dbReference>
<dbReference type="SMR" id="B1KP56"/>
<dbReference type="STRING" id="392500.Swoo_4838"/>
<dbReference type="KEGG" id="swd:Swoo_4838"/>
<dbReference type="eggNOG" id="COG2987">
    <property type="taxonomic scope" value="Bacteria"/>
</dbReference>
<dbReference type="HOGENOM" id="CLU_018868_0_1_6"/>
<dbReference type="UniPathway" id="UPA00379">
    <property type="reaction ID" value="UER00550"/>
</dbReference>
<dbReference type="Proteomes" id="UP000002168">
    <property type="component" value="Chromosome"/>
</dbReference>
<dbReference type="GO" id="GO:0005737">
    <property type="term" value="C:cytoplasm"/>
    <property type="evidence" value="ECO:0007669"/>
    <property type="project" value="UniProtKB-SubCell"/>
</dbReference>
<dbReference type="GO" id="GO:0016153">
    <property type="term" value="F:urocanate hydratase activity"/>
    <property type="evidence" value="ECO:0007669"/>
    <property type="project" value="UniProtKB-UniRule"/>
</dbReference>
<dbReference type="GO" id="GO:0019556">
    <property type="term" value="P:L-histidine catabolic process to glutamate and formamide"/>
    <property type="evidence" value="ECO:0007669"/>
    <property type="project" value="UniProtKB-UniPathway"/>
</dbReference>
<dbReference type="GO" id="GO:0019557">
    <property type="term" value="P:L-histidine catabolic process to glutamate and formate"/>
    <property type="evidence" value="ECO:0007669"/>
    <property type="project" value="UniProtKB-UniPathway"/>
</dbReference>
<dbReference type="FunFam" id="3.40.50.10730:FF:000001">
    <property type="entry name" value="Urocanate hydratase"/>
    <property type="match status" value="1"/>
</dbReference>
<dbReference type="Gene3D" id="3.40.50.10730">
    <property type="entry name" value="Urocanase like domains"/>
    <property type="match status" value="1"/>
</dbReference>
<dbReference type="Gene3D" id="3.40.1770.10">
    <property type="entry name" value="Urocanase superfamily"/>
    <property type="match status" value="1"/>
</dbReference>
<dbReference type="HAMAP" id="MF_00577">
    <property type="entry name" value="HutU"/>
    <property type="match status" value="1"/>
</dbReference>
<dbReference type="InterPro" id="IPR055351">
    <property type="entry name" value="Urocanase"/>
</dbReference>
<dbReference type="InterPro" id="IPR023637">
    <property type="entry name" value="Urocanase-like"/>
</dbReference>
<dbReference type="InterPro" id="IPR035401">
    <property type="entry name" value="Urocanase_C"/>
</dbReference>
<dbReference type="InterPro" id="IPR038364">
    <property type="entry name" value="Urocanase_central_sf"/>
</dbReference>
<dbReference type="InterPro" id="IPR023636">
    <property type="entry name" value="Urocanase_CS"/>
</dbReference>
<dbReference type="InterPro" id="IPR035400">
    <property type="entry name" value="Urocanase_N"/>
</dbReference>
<dbReference type="InterPro" id="IPR035085">
    <property type="entry name" value="Urocanase_Rossmann-like"/>
</dbReference>
<dbReference type="InterPro" id="IPR036190">
    <property type="entry name" value="Urocanase_sf"/>
</dbReference>
<dbReference type="NCBIfam" id="TIGR01228">
    <property type="entry name" value="hutU"/>
    <property type="match status" value="1"/>
</dbReference>
<dbReference type="NCBIfam" id="NF003820">
    <property type="entry name" value="PRK05414.1"/>
    <property type="match status" value="1"/>
</dbReference>
<dbReference type="PANTHER" id="PTHR12216">
    <property type="entry name" value="UROCANATE HYDRATASE"/>
    <property type="match status" value="1"/>
</dbReference>
<dbReference type="PANTHER" id="PTHR12216:SF4">
    <property type="entry name" value="UROCANATE HYDRATASE"/>
    <property type="match status" value="1"/>
</dbReference>
<dbReference type="Pfam" id="PF01175">
    <property type="entry name" value="Urocanase"/>
    <property type="match status" value="1"/>
</dbReference>
<dbReference type="Pfam" id="PF17392">
    <property type="entry name" value="Urocanase_C"/>
    <property type="match status" value="1"/>
</dbReference>
<dbReference type="Pfam" id="PF17391">
    <property type="entry name" value="Urocanase_N"/>
    <property type="match status" value="1"/>
</dbReference>
<dbReference type="PIRSF" id="PIRSF001423">
    <property type="entry name" value="Urocanate_hydrat"/>
    <property type="match status" value="1"/>
</dbReference>
<dbReference type="SUPFAM" id="SSF111326">
    <property type="entry name" value="Urocanase"/>
    <property type="match status" value="1"/>
</dbReference>
<dbReference type="PROSITE" id="PS01233">
    <property type="entry name" value="UROCANASE"/>
    <property type="match status" value="1"/>
</dbReference>
<protein>
    <recommendedName>
        <fullName evidence="1">Urocanate hydratase</fullName>
        <shortName evidence="1">Urocanase</shortName>
        <ecNumber evidence="1">4.2.1.49</ecNumber>
    </recommendedName>
    <alternativeName>
        <fullName evidence="1">Imidazolonepropionate hydrolase</fullName>
    </alternativeName>
</protein>
<feature type="chain" id="PRO_1000129577" description="Urocanate hydratase">
    <location>
        <begin position="1"/>
        <end position="556"/>
    </location>
</feature>
<feature type="active site" evidence="1">
    <location>
        <position position="410"/>
    </location>
</feature>
<feature type="binding site" evidence="1">
    <location>
        <begin position="52"/>
        <end position="53"/>
    </location>
    <ligand>
        <name>NAD(+)</name>
        <dbReference type="ChEBI" id="CHEBI:57540"/>
    </ligand>
</feature>
<feature type="binding site" evidence="1">
    <location>
        <position position="130"/>
    </location>
    <ligand>
        <name>NAD(+)</name>
        <dbReference type="ChEBI" id="CHEBI:57540"/>
    </ligand>
</feature>
<feature type="binding site" evidence="1">
    <location>
        <begin position="176"/>
        <end position="178"/>
    </location>
    <ligand>
        <name>NAD(+)</name>
        <dbReference type="ChEBI" id="CHEBI:57540"/>
    </ligand>
</feature>
<feature type="binding site" evidence="1">
    <location>
        <position position="196"/>
    </location>
    <ligand>
        <name>NAD(+)</name>
        <dbReference type="ChEBI" id="CHEBI:57540"/>
    </ligand>
</feature>
<feature type="binding site" evidence="1">
    <location>
        <position position="201"/>
    </location>
    <ligand>
        <name>NAD(+)</name>
        <dbReference type="ChEBI" id="CHEBI:57540"/>
    </ligand>
</feature>
<feature type="binding site" evidence="1">
    <location>
        <begin position="242"/>
        <end position="243"/>
    </location>
    <ligand>
        <name>NAD(+)</name>
        <dbReference type="ChEBI" id="CHEBI:57540"/>
    </ligand>
</feature>
<feature type="binding site" evidence="1">
    <location>
        <begin position="263"/>
        <end position="267"/>
    </location>
    <ligand>
        <name>NAD(+)</name>
        <dbReference type="ChEBI" id="CHEBI:57540"/>
    </ligand>
</feature>
<feature type="binding site" evidence="1">
    <location>
        <begin position="273"/>
        <end position="274"/>
    </location>
    <ligand>
        <name>NAD(+)</name>
        <dbReference type="ChEBI" id="CHEBI:57540"/>
    </ligand>
</feature>
<feature type="binding site" evidence="1">
    <location>
        <position position="322"/>
    </location>
    <ligand>
        <name>NAD(+)</name>
        <dbReference type="ChEBI" id="CHEBI:57540"/>
    </ligand>
</feature>
<feature type="binding site" evidence="1">
    <location>
        <position position="492"/>
    </location>
    <ligand>
        <name>NAD(+)</name>
        <dbReference type="ChEBI" id="CHEBI:57540"/>
    </ligand>
</feature>
<accession>B1KP56</accession>
<keyword id="KW-0963">Cytoplasm</keyword>
<keyword id="KW-0369">Histidine metabolism</keyword>
<keyword id="KW-0456">Lyase</keyword>
<keyword id="KW-0520">NAD</keyword>
<keyword id="KW-1185">Reference proteome</keyword>
<reference key="1">
    <citation type="submission" date="2008-02" db="EMBL/GenBank/DDBJ databases">
        <title>Complete sequence of Shewanella woodyi ATCC 51908.</title>
        <authorList>
            <consortium name="US DOE Joint Genome Institute"/>
            <person name="Copeland A."/>
            <person name="Lucas S."/>
            <person name="Lapidus A."/>
            <person name="Glavina del Rio T."/>
            <person name="Dalin E."/>
            <person name="Tice H."/>
            <person name="Bruce D."/>
            <person name="Goodwin L."/>
            <person name="Pitluck S."/>
            <person name="Sims D."/>
            <person name="Brettin T."/>
            <person name="Detter J.C."/>
            <person name="Han C."/>
            <person name="Kuske C.R."/>
            <person name="Schmutz J."/>
            <person name="Larimer F."/>
            <person name="Land M."/>
            <person name="Hauser L."/>
            <person name="Kyrpides N."/>
            <person name="Lykidis A."/>
            <person name="Zhao J.-S."/>
            <person name="Richardson P."/>
        </authorList>
    </citation>
    <scope>NUCLEOTIDE SEQUENCE [LARGE SCALE GENOMIC DNA]</scope>
    <source>
        <strain>ATCC 51908 / MS32</strain>
    </source>
</reference>
<gene>
    <name evidence="1" type="primary">hutU</name>
    <name type="ordered locus">Swoo_4838</name>
</gene>
<sequence>MDKRHNPSRRIIAPHGSKLSCKSWTTEAPMRMLMNNLHPDVAERPEDLVVYGGIGRAARDWECYDKIIEVLQRLEEDETLLVQSGKPVGVFKTHNNAPRVIIANSNLVPHWANWEHFNELDKKGLAMYGQMTAGSWIYIGSQGIVQGTYETFVAMAKQHFGGSSAGKWILTGGLGGMGGAQPLAGTMAGYSVLTCEVDETRIDFRLRTRYVDKKATSLDEALAMIDEANKSGKPVSVGLLANAADVFAELVERGITPDVVTDQTSAHDPLNGYLPQGWSLEQAADMRKKDEAAVVKAAKQSMAVQVKAMLALQAAGAATTDYGNNIRQMAFEEGVENAFDFPGFVPAYVRPLFCEGIGPFRWAALSGDPEDIYKTDAKVKELIPDNPHLHNWLDMARERIAFQGLPSRICWVGLKDRARLALAFNEMVKNGELSAPVVIGRDHLDSGSVASPNRETESMLDGSDAVSDWPLMNALLNTASGATWVSLHHGGGVGMGFSQHSGVVIVADGTDDAAARLGRVLWNDPATGVMRHADAGYDIAKNCAKEQGLDLPMLEK</sequence>
<evidence type="ECO:0000255" key="1">
    <source>
        <dbReference type="HAMAP-Rule" id="MF_00577"/>
    </source>
</evidence>